<comment type="similarity">
    <text evidence="1">Belongs to the CinA family.</text>
</comment>
<evidence type="ECO:0000255" key="1">
    <source>
        <dbReference type="HAMAP-Rule" id="MF_00226"/>
    </source>
</evidence>
<protein>
    <recommendedName>
        <fullName evidence="1">Protein PF0476</fullName>
    </recommendedName>
</protein>
<organism>
    <name type="scientific">Pyrococcus furiosus (strain ATCC 43587 / DSM 3638 / JCM 8422 / Vc1)</name>
    <dbReference type="NCBI Taxonomy" id="186497"/>
    <lineage>
        <taxon>Archaea</taxon>
        <taxon>Methanobacteriati</taxon>
        <taxon>Methanobacteriota</taxon>
        <taxon>Thermococci</taxon>
        <taxon>Thermococcales</taxon>
        <taxon>Thermococcaceae</taxon>
        <taxon>Pyrococcus</taxon>
    </lineage>
</organism>
<gene>
    <name type="ordered locus">PF0476</name>
</gene>
<reference key="1">
    <citation type="journal article" date="1999" name="Genetics">
        <title>Divergence of the hyperthermophilic archaea Pyrococcus furiosus and P. horikoshii inferred from complete genomic sequences.</title>
        <authorList>
            <person name="Maeder D.L."/>
            <person name="Weiss R.B."/>
            <person name="Dunn D.M."/>
            <person name="Cherry J.L."/>
            <person name="Gonzalez J.M."/>
            <person name="DiRuggiero J."/>
            <person name="Robb F.T."/>
        </authorList>
    </citation>
    <scope>NUCLEOTIDE SEQUENCE [LARGE SCALE GENOMIC DNA]</scope>
    <source>
        <strain>ATCC 43587 / DSM 3638 / JCM 8422 / Vc1</strain>
    </source>
</reference>
<accession>Q8U3J0</accession>
<sequence>MFAEIITVGDELLTGNTVNSNSAHIAKKLTERGYLVKRITTVGDDVEDIRSVILESLNRKPDVLIISGGLGPTHDDVTMVAVAKALGKELVLCEKCLEEIKEFYERLYREGLIDDPTLNDARKKMAYLPKGAIPLKNSVGAAPGAYIEYRGTKIFVLPGMPREMKAMLEEEVLPRIGSKKFVQKKYLAEITDESKLAPILEETIKIFDVKIHSSPKGFGKFIGIIIFAQDEDTIKKAVEFMKSKGIEFREGW</sequence>
<name>Y476_PYRFU</name>
<dbReference type="EMBL" id="AE009950">
    <property type="protein sequence ID" value="AAL80600.1"/>
    <property type="molecule type" value="Genomic_DNA"/>
</dbReference>
<dbReference type="RefSeq" id="WP_011011593.1">
    <property type="nucleotide sequence ID" value="NZ_CP023154.1"/>
</dbReference>
<dbReference type="SMR" id="Q8U3J0"/>
<dbReference type="STRING" id="186497.PF0476"/>
<dbReference type="PaxDb" id="186497-PF0476"/>
<dbReference type="KEGG" id="pfu:PF0476"/>
<dbReference type="PATRIC" id="fig|186497.12.peg.500"/>
<dbReference type="eggNOG" id="arCOG00215">
    <property type="taxonomic scope" value="Archaea"/>
</dbReference>
<dbReference type="HOGENOM" id="CLU_030805_0_5_2"/>
<dbReference type="OrthoDB" id="372037at2157"/>
<dbReference type="PhylomeDB" id="Q8U3J0"/>
<dbReference type="Proteomes" id="UP000001013">
    <property type="component" value="Chromosome"/>
</dbReference>
<dbReference type="CDD" id="cd00885">
    <property type="entry name" value="cinA"/>
    <property type="match status" value="1"/>
</dbReference>
<dbReference type="Gene3D" id="3.40.980.10">
    <property type="entry name" value="MoaB/Mog-like domain"/>
    <property type="match status" value="1"/>
</dbReference>
<dbReference type="HAMAP" id="MF_00226_A">
    <property type="entry name" value="CinA_A"/>
    <property type="match status" value="1"/>
</dbReference>
<dbReference type="InterPro" id="IPR050101">
    <property type="entry name" value="CinA"/>
</dbReference>
<dbReference type="InterPro" id="IPR023055">
    <property type="entry name" value="CinA_Arc"/>
</dbReference>
<dbReference type="InterPro" id="IPR036425">
    <property type="entry name" value="MoaB/Mog-like_dom_sf"/>
</dbReference>
<dbReference type="InterPro" id="IPR001453">
    <property type="entry name" value="MoaB/Mog_dom"/>
</dbReference>
<dbReference type="NCBIfam" id="TIGR00177">
    <property type="entry name" value="molyb_syn"/>
    <property type="match status" value="1"/>
</dbReference>
<dbReference type="NCBIfam" id="NF002977">
    <property type="entry name" value="PRK03670.1"/>
    <property type="match status" value="1"/>
</dbReference>
<dbReference type="PANTHER" id="PTHR13939">
    <property type="entry name" value="NICOTINAMIDE-NUCLEOTIDE AMIDOHYDROLASE PNCC"/>
    <property type="match status" value="1"/>
</dbReference>
<dbReference type="PANTHER" id="PTHR13939:SF0">
    <property type="entry name" value="NMN AMIDOHYDROLASE-LIKE PROTEIN YFAY"/>
    <property type="match status" value="1"/>
</dbReference>
<dbReference type="Pfam" id="PF00994">
    <property type="entry name" value="MoCF_biosynth"/>
    <property type="match status" value="1"/>
</dbReference>
<dbReference type="SMART" id="SM00852">
    <property type="entry name" value="MoCF_biosynth"/>
    <property type="match status" value="1"/>
</dbReference>
<dbReference type="SUPFAM" id="SSF53218">
    <property type="entry name" value="Molybdenum cofactor biosynthesis proteins"/>
    <property type="match status" value="1"/>
</dbReference>
<proteinExistence type="inferred from homology"/>
<keyword id="KW-1185">Reference proteome</keyword>
<feature type="chain" id="PRO_0000156799" description="Protein PF0476">
    <location>
        <begin position="1"/>
        <end position="252"/>
    </location>
</feature>